<feature type="chain" id="PRO_0000161741" description="DNA ligase">
    <location>
        <begin position="1"/>
        <end position="672"/>
    </location>
</feature>
<feature type="domain" description="BRCT" evidence="1">
    <location>
        <begin position="592"/>
        <end position="672"/>
    </location>
</feature>
<feature type="active site" description="N6-AMP-lysine intermediate" evidence="1">
    <location>
        <position position="115"/>
    </location>
</feature>
<feature type="binding site" evidence="1">
    <location>
        <begin position="32"/>
        <end position="36"/>
    </location>
    <ligand>
        <name>NAD(+)</name>
        <dbReference type="ChEBI" id="CHEBI:57540"/>
    </ligand>
</feature>
<feature type="binding site" evidence="1">
    <location>
        <begin position="82"/>
        <end position="83"/>
    </location>
    <ligand>
        <name>NAD(+)</name>
        <dbReference type="ChEBI" id="CHEBI:57540"/>
    </ligand>
</feature>
<feature type="binding site" evidence="1">
    <location>
        <position position="113"/>
    </location>
    <ligand>
        <name>NAD(+)</name>
        <dbReference type="ChEBI" id="CHEBI:57540"/>
    </ligand>
</feature>
<feature type="binding site" evidence="1">
    <location>
        <position position="136"/>
    </location>
    <ligand>
        <name>NAD(+)</name>
        <dbReference type="ChEBI" id="CHEBI:57540"/>
    </ligand>
</feature>
<feature type="binding site" evidence="1">
    <location>
        <position position="173"/>
    </location>
    <ligand>
        <name>NAD(+)</name>
        <dbReference type="ChEBI" id="CHEBI:57540"/>
    </ligand>
</feature>
<feature type="binding site" evidence="1">
    <location>
        <position position="290"/>
    </location>
    <ligand>
        <name>NAD(+)</name>
        <dbReference type="ChEBI" id="CHEBI:57540"/>
    </ligand>
</feature>
<feature type="binding site" evidence="1">
    <location>
        <position position="314"/>
    </location>
    <ligand>
        <name>NAD(+)</name>
        <dbReference type="ChEBI" id="CHEBI:57540"/>
    </ligand>
</feature>
<feature type="binding site" evidence="1">
    <location>
        <position position="408"/>
    </location>
    <ligand>
        <name>Zn(2+)</name>
        <dbReference type="ChEBI" id="CHEBI:29105"/>
    </ligand>
</feature>
<feature type="binding site" evidence="1">
    <location>
        <position position="411"/>
    </location>
    <ligand>
        <name>Zn(2+)</name>
        <dbReference type="ChEBI" id="CHEBI:29105"/>
    </ligand>
</feature>
<feature type="binding site" evidence="1">
    <location>
        <position position="427"/>
    </location>
    <ligand>
        <name>Zn(2+)</name>
        <dbReference type="ChEBI" id="CHEBI:29105"/>
    </ligand>
</feature>
<feature type="binding site" evidence="1">
    <location>
        <position position="433"/>
    </location>
    <ligand>
        <name>Zn(2+)</name>
        <dbReference type="ChEBI" id="CHEBI:29105"/>
    </ligand>
</feature>
<gene>
    <name evidence="1" type="primary">ligA</name>
    <name type="synonym">lig</name>
    <name type="ordered locus">bbp_062</name>
</gene>
<dbReference type="EC" id="6.5.1.2" evidence="1"/>
<dbReference type="EMBL" id="AE016826">
    <property type="protein sequence ID" value="AAO26801.1"/>
    <property type="molecule type" value="Genomic_DNA"/>
</dbReference>
<dbReference type="RefSeq" id="WP_011091202.1">
    <property type="nucleotide sequence ID" value="NC_004545.1"/>
</dbReference>
<dbReference type="SMR" id="Q89B02"/>
<dbReference type="STRING" id="224915.bbp_062"/>
<dbReference type="KEGG" id="bab:bbp_062"/>
<dbReference type="eggNOG" id="COG0272">
    <property type="taxonomic scope" value="Bacteria"/>
</dbReference>
<dbReference type="HOGENOM" id="CLU_007764_2_0_6"/>
<dbReference type="OrthoDB" id="9759736at2"/>
<dbReference type="Proteomes" id="UP000000601">
    <property type="component" value="Chromosome"/>
</dbReference>
<dbReference type="GO" id="GO:0003911">
    <property type="term" value="F:DNA ligase (NAD+) activity"/>
    <property type="evidence" value="ECO:0007669"/>
    <property type="project" value="UniProtKB-UniRule"/>
</dbReference>
<dbReference type="GO" id="GO:0046872">
    <property type="term" value="F:metal ion binding"/>
    <property type="evidence" value="ECO:0007669"/>
    <property type="project" value="UniProtKB-KW"/>
</dbReference>
<dbReference type="GO" id="GO:0006281">
    <property type="term" value="P:DNA repair"/>
    <property type="evidence" value="ECO:0007669"/>
    <property type="project" value="UniProtKB-KW"/>
</dbReference>
<dbReference type="GO" id="GO:0006260">
    <property type="term" value="P:DNA replication"/>
    <property type="evidence" value="ECO:0007669"/>
    <property type="project" value="UniProtKB-KW"/>
</dbReference>
<dbReference type="CDD" id="cd00114">
    <property type="entry name" value="LIGANc"/>
    <property type="match status" value="1"/>
</dbReference>
<dbReference type="Gene3D" id="1.10.150.20">
    <property type="entry name" value="5' to 3' exonuclease, C-terminal subdomain"/>
    <property type="match status" value="2"/>
</dbReference>
<dbReference type="Gene3D" id="3.40.50.10190">
    <property type="entry name" value="BRCT domain"/>
    <property type="match status" value="1"/>
</dbReference>
<dbReference type="Gene3D" id="3.30.470.30">
    <property type="entry name" value="DNA ligase/mRNA capping enzyme"/>
    <property type="match status" value="1"/>
</dbReference>
<dbReference type="Gene3D" id="1.10.287.610">
    <property type="entry name" value="Helix hairpin bin"/>
    <property type="match status" value="1"/>
</dbReference>
<dbReference type="Gene3D" id="2.40.50.140">
    <property type="entry name" value="Nucleic acid-binding proteins"/>
    <property type="match status" value="1"/>
</dbReference>
<dbReference type="HAMAP" id="MF_01588">
    <property type="entry name" value="DNA_ligase_A"/>
    <property type="match status" value="1"/>
</dbReference>
<dbReference type="InterPro" id="IPR001357">
    <property type="entry name" value="BRCT_dom"/>
</dbReference>
<dbReference type="InterPro" id="IPR036420">
    <property type="entry name" value="BRCT_dom_sf"/>
</dbReference>
<dbReference type="InterPro" id="IPR041663">
    <property type="entry name" value="DisA/LigA_HHH"/>
</dbReference>
<dbReference type="InterPro" id="IPR001679">
    <property type="entry name" value="DNA_ligase"/>
</dbReference>
<dbReference type="InterPro" id="IPR018239">
    <property type="entry name" value="DNA_ligase_AS"/>
</dbReference>
<dbReference type="InterPro" id="IPR033136">
    <property type="entry name" value="DNA_ligase_CS"/>
</dbReference>
<dbReference type="InterPro" id="IPR013839">
    <property type="entry name" value="DNAligase_adenylation"/>
</dbReference>
<dbReference type="InterPro" id="IPR013840">
    <property type="entry name" value="DNAligase_N"/>
</dbReference>
<dbReference type="InterPro" id="IPR012340">
    <property type="entry name" value="NA-bd_OB-fold"/>
</dbReference>
<dbReference type="InterPro" id="IPR004150">
    <property type="entry name" value="NAD_DNA_ligase_OB"/>
</dbReference>
<dbReference type="InterPro" id="IPR010994">
    <property type="entry name" value="RuvA_2-like"/>
</dbReference>
<dbReference type="NCBIfam" id="TIGR00575">
    <property type="entry name" value="dnlj"/>
    <property type="match status" value="1"/>
</dbReference>
<dbReference type="NCBIfam" id="NF005932">
    <property type="entry name" value="PRK07956.1"/>
    <property type="match status" value="1"/>
</dbReference>
<dbReference type="Pfam" id="PF00533">
    <property type="entry name" value="BRCT"/>
    <property type="match status" value="1"/>
</dbReference>
<dbReference type="Pfam" id="PF01653">
    <property type="entry name" value="DNA_ligase_aden"/>
    <property type="match status" value="1"/>
</dbReference>
<dbReference type="Pfam" id="PF03120">
    <property type="entry name" value="DNA_ligase_OB"/>
    <property type="match status" value="1"/>
</dbReference>
<dbReference type="Pfam" id="PF12826">
    <property type="entry name" value="HHH_2"/>
    <property type="match status" value="1"/>
</dbReference>
<dbReference type="Pfam" id="PF14520">
    <property type="entry name" value="HHH_5"/>
    <property type="match status" value="1"/>
</dbReference>
<dbReference type="Pfam" id="PF22745">
    <property type="entry name" value="Nlig-Ia"/>
    <property type="match status" value="1"/>
</dbReference>
<dbReference type="PIRSF" id="PIRSF001604">
    <property type="entry name" value="LigA"/>
    <property type="match status" value="1"/>
</dbReference>
<dbReference type="SMART" id="SM00292">
    <property type="entry name" value="BRCT"/>
    <property type="match status" value="1"/>
</dbReference>
<dbReference type="SMART" id="SM00532">
    <property type="entry name" value="LIGANc"/>
    <property type="match status" value="1"/>
</dbReference>
<dbReference type="SUPFAM" id="SSF52113">
    <property type="entry name" value="BRCT domain"/>
    <property type="match status" value="1"/>
</dbReference>
<dbReference type="SUPFAM" id="SSF56091">
    <property type="entry name" value="DNA ligase/mRNA capping enzyme, catalytic domain"/>
    <property type="match status" value="1"/>
</dbReference>
<dbReference type="SUPFAM" id="SSF50249">
    <property type="entry name" value="Nucleic acid-binding proteins"/>
    <property type="match status" value="1"/>
</dbReference>
<dbReference type="SUPFAM" id="SSF47781">
    <property type="entry name" value="RuvA domain 2-like"/>
    <property type="match status" value="1"/>
</dbReference>
<dbReference type="PROSITE" id="PS01055">
    <property type="entry name" value="DNA_LIGASE_N1"/>
    <property type="match status" value="1"/>
</dbReference>
<dbReference type="PROSITE" id="PS01056">
    <property type="entry name" value="DNA_LIGASE_N2"/>
    <property type="match status" value="1"/>
</dbReference>
<protein>
    <recommendedName>
        <fullName evidence="1">DNA ligase</fullName>
        <ecNumber evidence="1">6.5.1.2</ecNumber>
    </recommendedName>
    <alternativeName>
        <fullName evidence="1">Polydeoxyribonucleotide synthase [NAD(+)]</fullName>
    </alternativeName>
</protein>
<accession>Q89B02</accession>
<evidence type="ECO:0000255" key="1">
    <source>
        <dbReference type="HAMAP-Rule" id="MF_01588"/>
    </source>
</evidence>
<organism>
    <name type="scientific">Buchnera aphidicola subsp. Baizongia pistaciae (strain Bp)</name>
    <dbReference type="NCBI Taxonomy" id="224915"/>
    <lineage>
        <taxon>Bacteria</taxon>
        <taxon>Pseudomonadati</taxon>
        <taxon>Pseudomonadota</taxon>
        <taxon>Gammaproteobacteria</taxon>
        <taxon>Enterobacterales</taxon>
        <taxon>Erwiniaceae</taxon>
        <taxon>Buchnera</taxon>
    </lineage>
</organism>
<proteinExistence type="inferred from homology"/>
<reference key="1">
    <citation type="journal article" date="2003" name="Proc. Natl. Acad. Sci. U.S.A.">
        <title>Reductive genome evolution in Buchnera aphidicola.</title>
        <authorList>
            <person name="van Ham R.C.H.J."/>
            <person name="Kamerbeek J."/>
            <person name="Palacios C."/>
            <person name="Rausell C."/>
            <person name="Abascal F."/>
            <person name="Bastolla U."/>
            <person name="Fernandez J.M."/>
            <person name="Jimenez L."/>
            <person name="Postigo M."/>
            <person name="Silva F.J."/>
            <person name="Tamames J."/>
            <person name="Viguera E."/>
            <person name="Latorre A."/>
            <person name="Valencia A."/>
            <person name="Moran F."/>
            <person name="Moya A."/>
        </authorList>
    </citation>
    <scope>NUCLEOTIDE SEQUENCE [LARGE SCALE GENOMIC DNA]</scope>
    <source>
        <strain>Bp</strain>
    </source>
</reference>
<name>DNLJ_BUCBP</name>
<sequence length="672" mass="76903">MKDIKNYILKLQDEIRYHAYLYHTLNSPKISDEKYDFLVIELQRLEKKCKYSVRFKDSPTQSVGSENLPEFKKFSHITPMLSLNNVFIKNDFLKFYKKIVNNITVEKIFFCSELKFDGVAINLIYINGLLFRAVTRGNGYEGEDVTSNVNMISSVPKKLIGIDIPETLEVRGEIFMLKSDFKKLNVRLTKFKKKLFSNSRNAASGSLRHKNAKVTELRSLTFYCYGCGYCSYENFTDSHFLRLKKLKSWGFPISDYNFLHSSYDEILRFYNFIQNERYFLNFNIDGIVIKVDSICLQKSLSTTSKAPRWAVAYKFSDKIKITTIMNILYQVGRTGVITPVAQVTPIYISGVLIKKVSLHNFNEIRRLNLNIGDSVFIKRSGDVIPHIIEVASKCKLQRNEDISIPKFCPECGSKLKVDSFSNIKIRCMAGLKCLSQFKKLLHYFCSKKGLNILGLGPKIIDKLVDLGYVSDLSDIFDLNVSLLTKVENIGIIKSQNIIRSINNSKNVSFSKFLCSLGIFEVGSIVARSISNYFFTLDKFMNSSKEEFLLINGIGVNIADNLYNFINDEFNKNIIFKLSKKLNISSDINAIIDNNNTLFRKKIVFSGSFSNFSRSKIIELSKKLGIIVVSSVSKSVDYIIIGKKPGRKLIKAKKFSIPGIYEKEFLNIINVYL</sequence>
<keyword id="KW-0227">DNA damage</keyword>
<keyword id="KW-0234">DNA repair</keyword>
<keyword id="KW-0235">DNA replication</keyword>
<keyword id="KW-0436">Ligase</keyword>
<keyword id="KW-0460">Magnesium</keyword>
<keyword id="KW-0464">Manganese</keyword>
<keyword id="KW-0479">Metal-binding</keyword>
<keyword id="KW-0520">NAD</keyword>
<keyword id="KW-1185">Reference proteome</keyword>
<keyword id="KW-0862">Zinc</keyword>
<comment type="function">
    <text evidence="1">DNA ligase that catalyzes the formation of phosphodiester linkages between 5'-phosphoryl and 3'-hydroxyl groups in double-stranded DNA using NAD as a coenzyme and as the energy source for the reaction. It is essential for DNA replication and repair of damaged DNA.</text>
</comment>
<comment type="catalytic activity">
    <reaction evidence="1">
        <text>NAD(+) + (deoxyribonucleotide)n-3'-hydroxyl + 5'-phospho-(deoxyribonucleotide)m = (deoxyribonucleotide)n+m + AMP + beta-nicotinamide D-nucleotide.</text>
        <dbReference type="EC" id="6.5.1.2"/>
    </reaction>
</comment>
<comment type="cofactor">
    <cofactor evidence="1">
        <name>Mg(2+)</name>
        <dbReference type="ChEBI" id="CHEBI:18420"/>
    </cofactor>
    <cofactor evidence="1">
        <name>Mn(2+)</name>
        <dbReference type="ChEBI" id="CHEBI:29035"/>
    </cofactor>
</comment>
<comment type="similarity">
    <text evidence="1">Belongs to the NAD-dependent DNA ligase family. LigA subfamily.</text>
</comment>